<gene>
    <name type="ordered locus">Ken-073</name>
</gene>
<organism>
    <name type="scientific">African swine fever virus (isolate Pig/Kenya/KEN-50/1950)</name>
    <name type="common">ASFV</name>
    <dbReference type="NCBI Taxonomy" id="561445"/>
    <lineage>
        <taxon>Viruses</taxon>
        <taxon>Varidnaviria</taxon>
        <taxon>Bamfordvirae</taxon>
        <taxon>Nucleocytoviricota</taxon>
        <taxon>Pokkesviricetes</taxon>
        <taxon>Asfuvirales</taxon>
        <taxon>Asfarviridae</taxon>
        <taxon>Asfivirus</taxon>
        <taxon>African swine fever virus</taxon>
    </lineage>
</organism>
<comment type="subcellular location">
    <subcellularLocation>
        <location evidence="1">Virion</location>
    </subcellularLocation>
</comment>
<comment type="induction">
    <text evidence="2">Expressed in the early phase of the viral replicative cycle.</text>
</comment>
<comment type="similarity">
    <text evidence="2">Belongs to the asfivirus M448R family.</text>
</comment>
<evidence type="ECO:0000250" key="1">
    <source>
        <dbReference type="UniProtKB" id="Q65153"/>
    </source>
</evidence>
<evidence type="ECO:0000305" key="2"/>
<sequence length="448" mass="52321">MSNESFPETLENLLSTLQTKQQNAIQSEVIKWLHSFCETFHLKIHCHKQFIPSGEKKWPKIPTQETQENTQPPHHVHRVVLSRAQPLKVQESLLTTMCNGLVLDANTWTCLAVPPPAPFQQVTRQVQHYYRNKFYEVAAIQDGTLLTIYYWDDPEHGPSWCLASTHGYDVSNYCWIGDKTFAELVYELLQQHSTCNVTLEKNKTRGTRLFFNELNRDYCYTIGIRHHNLQPLIHDPQNIWAIQSTNLKTLKTVYPEYYGYVGIPGIQSQVPELPQFELPYLIRSYRTAMNQAKNAIKNGKKEKEYFNYGYLLISRAPAITKSISIVLLKSPLLVFLQKSVYQKKYNISSSLRLEFIILQNYLMQHFRDNFIALFPQYISYYMKYQNMLNMIIHSIAIKDKDHPFAGAVVKKVLEDIENAENIIDHTTIQNYAYQSKYAMLYLSIITHF</sequence>
<protein>
    <recommendedName>
        <fullName evidence="1">Putative RNA-ligase</fullName>
        <shortName>pM448R</shortName>
    </recommendedName>
</protein>
<name>RLIG_ASFK5</name>
<reference key="1">
    <citation type="submission" date="2003-03" db="EMBL/GenBank/DDBJ databases">
        <title>African swine fever virus genomes.</title>
        <authorList>
            <person name="Kutish G.F."/>
            <person name="Rock D.L."/>
        </authorList>
    </citation>
    <scope>NUCLEOTIDE SEQUENCE [LARGE SCALE GENOMIC DNA]</scope>
</reference>
<proteinExistence type="inferred from homology"/>
<dbReference type="EMBL" id="AY261360">
    <property type="status" value="NOT_ANNOTATED_CDS"/>
    <property type="molecule type" value="Genomic_DNA"/>
</dbReference>
<dbReference type="Proteomes" id="UP000000861">
    <property type="component" value="Segment"/>
</dbReference>
<dbReference type="GO" id="GO:0044423">
    <property type="term" value="C:virion component"/>
    <property type="evidence" value="ECO:0007669"/>
    <property type="project" value="UniProtKB-KW"/>
</dbReference>
<keyword id="KW-0244">Early protein</keyword>
<keyword id="KW-0946">Virion</keyword>
<organismHost>
    <name type="scientific">Ornithodoros</name>
    <name type="common">relapsing fever ticks</name>
    <dbReference type="NCBI Taxonomy" id="6937"/>
</organismHost>
<organismHost>
    <name type="scientific">Phacochoerus aethiopicus</name>
    <name type="common">Warthog</name>
    <dbReference type="NCBI Taxonomy" id="85517"/>
</organismHost>
<organismHost>
    <name type="scientific">Phacochoerus africanus</name>
    <name type="common">Warthog</name>
    <dbReference type="NCBI Taxonomy" id="41426"/>
</organismHost>
<organismHost>
    <name type="scientific">Potamochoerus larvatus</name>
    <name type="common">Bushpig</name>
    <dbReference type="NCBI Taxonomy" id="273792"/>
</organismHost>
<organismHost>
    <name type="scientific">Sus scrofa</name>
    <name type="common">Pig</name>
    <dbReference type="NCBI Taxonomy" id="9823"/>
</organismHost>
<accession>P0CAH3</accession>
<feature type="chain" id="PRO_0000373691" description="Putative RNA-ligase">
    <location>
        <begin position="1"/>
        <end position="448"/>
    </location>
</feature>